<dbReference type="EC" id="3.4.23.36" evidence="1"/>
<dbReference type="EMBL" id="CP000235">
    <property type="protein sequence ID" value="ABD44336.1"/>
    <property type="molecule type" value="Genomic_DNA"/>
</dbReference>
<dbReference type="RefSeq" id="WP_011451207.1">
    <property type="nucleotide sequence ID" value="NC_007797.1"/>
</dbReference>
<dbReference type="SMR" id="Q2GIV1"/>
<dbReference type="STRING" id="212042.APH_1160"/>
<dbReference type="PaxDb" id="212042-APH_1160"/>
<dbReference type="EnsemblBacteria" id="ABD44336">
    <property type="protein sequence ID" value="ABD44336"/>
    <property type="gene ID" value="APH_1160"/>
</dbReference>
<dbReference type="GeneID" id="92747941"/>
<dbReference type="KEGG" id="aph:APH_1160"/>
<dbReference type="eggNOG" id="COG0597">
    <property type="taxonomic scope" value="Bacteria"/>
</dbReference>
<dbReference type="HOGENOM" id="CLU_083252_4_3_5"/>
<dbReference type="UniPathway" id="UPA00665"/>
<dbReference type="Proteomes" id="UP000001943">
    <property type="component" value="Chromosome"/>
</dbReference>
<dbReference type="GO" id="GO:0005886">
    <property type="term" value="C:plasma membrane"/>
    <property type="evidence" value="ECO:0007669"/>
    <property type="project" value="UniProtKB-SubCell"/>
</dbReference>
<dbReference type="GO" id="GO:0004190">
    <property type="term" value="F:aspartic-type endopeptidase activity"/>
    <property type="evidence" value="ECO:0007669"/>
    <property type="project" value="UniProtKB-UniRule"/>
</dbReference>
<dbReference type="GO" id="GO:0006508">
    <property type="term" value="P:proteolysis"/>
    <property type="evidence" value="ECO:0007669"/>
    <property type="project" value="UniProtKB-KW"/>
</dbReference>
<dbReference type="HAMAP" id="MF_00161">
    <property type="entry name" value="LspA"/>
    <property type="match status" value="1"/>
</dbReference>
<dbReference type="InterPro" id="IPR001872">
    <property type="entry name" value="Peptidase_A8"/>
</dbReference>
<dbReference type="NCBIfam" id="TIGR00077">
    <property type="entry name" value="lspA"/>
    <property type="match status" value="1"/>
</dbReference>
<dbReference type="NCBIfam" id="NF011357">
    <property type="entry name" value="PRK14775.1"/>
    <property type="match status" value="1"/>
</dbReference>
<dbReference type="PANTHER" id="PTHR33695">
    <property type="entry name" value="LIPOPROTEIN SIGNAL PEPTIDASE"/>
    <property type="match status" value="1"/>
</dbReference>
<dbReference type="PANTHER" id="PTHR33695:SF1">
    <property type="entry name" value="LIPOPROTEIN SIGNAL PEPTIDASE"/>
    <property type="match status" value="1"/>
</dbReference>
<dbReference type="Pfam" id="PF01252">
    <property type="entry name" value="Peptidase_A8"/>
    <property type="match status" value="1"/>
</dbReference>
<dbReference type="PRINTS" id="PR00781">
    <property type="entry name" value="LIPOSIGPTASE"/>
</dbReference>
<proteinExistence type="inferred from homology"/>
<protein>
    <recommendedName>
        <fullName evidence="1">Lipoprotein signal peptidase</fullName>
        <ecNumber evidence="1">3.4.23.36</ecNumber>
    </recommendedName>
    <alternativeName>
        <fullName evidence="1">Prolipoprotein signal peptidase</fullName>
    </alternativeName>
    <alternativeName>
        <fullName evidence="1">Signal peptidase II</fullName>
        <shortName evidence="1">SPase II</shortName>
    </alternativeName>
</protein>
<sequence>MRKSIIGIIVLHVVMALDQISKLYMSKLYAAHGDITVFEYCNLIQLWNKGISFGLFSTLENGNTVFMVLSAVIIAILSYTKIKTKSMSRSCCLSVIVGGALGNLMDRLRFGAVYDFIDLHIGDWHWPAFNLADLTITCGVIVFLAMELRKRSQLNA</sequence>
<gene>
    <name evidence="1" type="primary">lspA</name>
    <name type="ordered locus">APH_1160</name>
</gene>
<evidence type="ECO:0000255" key="1">
    <source>
        <dbReference type="HAMAP-Rule" id="MF_00161"/>
    </source>
</evidence>
<name>LSPA_ANAPZ</name>
<accession>Q2GIV1</accession>
<comment type="function">
    <text evidence="1">This protein specifically catalyzes the removal of signal peptides from prolipoproteins.</text>
</comment>
<comment type="catalytic activity">
    <reaction evidence="1">
        <text>Release of signal peptides from bacterial membrane prolipoproteins. Hydrolyzes -Xaa-Yaa-Zaa-|-(S,diacylglyceryl)Cys-, in which Xaa is hydrophobic (preferably Leu), and Yaa (Ala or Ser) and Zaa (Gly or Ala) have small, neutral side chains.</text>
        <dbReference type="EC" id="3.4.23.36"/>
    </reaction>
</comment>
<comment type="pathway">
    <text evidence="1">Protein modification; lipoprotein biosynthesis (signal peptide cleavage).</text>
</comment>
<comment type="subcellular location">
    <subcellularLocation>
        <location evidence="1">Cell inner membrane</location>
        <topology evidence="1">Multi-pass membrane protein</topology>
    </subcellularLocation>
</comment>
<comment type="similarity">
    <text evidence="1">Belongs to the peptidase A8 family.</text>
</comment>
<feature type="chain" id="PRO_1000076915" description="Lipoprotein signal peptidase">
    <location>
        <begin position="1"/>
        <end position="156"/>
    </location>
</feature>
<feature type="transmembrane region" description="Helical" evidence="1">
    <location>
        <begin position="62"/>
        <end position="82"/>
    </location>
</feature>
<feature type="transmembrane region" description="Helical" evidence="1">
    <location>
        <begin position="126"/>
        <end position="146"/>
    </location>
</feature>
<feature type="active site" evidence="1">
    <location>
        <position position="115"/>
    </location>
</feature>
<feature type="active site" evidence="1">
    <location>
        <position position="133"/>
    </location>
</feature>
<keyword id="KW-0064">Aspartyl protease</keyword>
<keyword id="KW-0997">Cell inner membrane</keyword>
<keyword id="KW-1003">Cell membrane</keyword>
<keyword id="KW-0378">Hydrolase</keyword>
<keyword id="KW-0472">Membrane</keyword>
<keyword id="KW-0645">Protease</keyword>
<keyword id="KW-0812">Transmembrane</keyword>
<keyword id="KW-1133">Transmembrane helix</keyword>
<reference key="1">
    <citation type="journal article" date="2006" name="PLoS Genet.">
        <title>Comparative genomics of emerging human ehrlichiosis agents.</title>
        <authorList>
            <person name="Dunning Hotopp J.C."/>
            <person name="Lin M."/>
            <person name="Madupu R."/>
            <person name="Crabtree J."/>
            <person name="Angiuoli S.V."/>
            <person name="Eisen J.A."/>
            <person name="Seshadri R."/>
            <person name="Ren Q."/>
            <person name="Wu M."/>
            <person name="Utterback T.R."/>
            <person name="Smith S."/>
            <person name="Lewis M."/>
            <person name="Khouri H."/>
            <person name="Zhang C."/>
            <person name="Niu H."/>
            <person name="Lin Q."/>
            <person name="Ohashi N."/>
            <person name="Zhi N."/>
            <person name="Nelson W.C."/>
            <person name="Brinkac L.M."/>
            <person name="Dodson R.J."/>
            <person name="Rosovitz M.J."/>
            <person name="Sundaram J.P."/>
            <person name="Daugherty S.C."/>
            <person name="Davidsen T."/>
            <person name="Durkin A.S."/>
            <person name="Gwinn M.L."/>
            <person name="Haft D.H."/>
            <person name="Selengut J.D."/>
            <person name="Sullivan S.A."/>
            <person name="Zafar N."/>
            <person name="Zhou L."/>
            <person name="Benahmed F."/>
            <person name="Forberger H."/>
            <person name="Halpin R."/>
            <person name="Mulligan S."/>
            <person name="Robinson J."/>
            <person name="White O."/>
            <person name="Rikihisa Y."/>
            <person name="Tettelin H."/>
        </authorList>
    </citation>
    <scope>NUCLEOTIDE SEQUENCE [LARGE SCALE GENOMIC DNA]</scope>
    <source>
        <strain>HZ</strain>
    </source>
</reference>
<organism>
    <name type="scientific">Anaplasma phagocytophilum (strain HZ)</name>
    <dbReference type="NCBI Taxonomy" id="212042"/>
    <lineage>
        <taxon>Bacteria</taxon>
        <taxon>Pseudomonadati</taxon>
        <taxon>Pseudomonadota</taxon>
        <taxon>Alphaproteobacteria</taxon>
        <taxon>Rickettsiales</taxon>
        <taxon>Anaplasmataceae</taxon>
        <taxon>Anaplasma</taxon>
        <taxon>phagocytophilum group</taxon>
    </lineage>
</organism>